<evidence type="ECO:0000255" key="1">
    <source>
        <dbReference type="HAMAP-Rule" id="MF_00761"/>
    </source>
</evidence>
<gene>
    <name type="ordered locus">BceJ2315_15790</name>
    <name type="ORF">BCAL1615</name>
</gene>
<comment type="similarity">
    <text evidence="1">Belongs to the UPF0303 family.</text>
</comment>
<organism>
    <name type="scientific">Burkholderia cenocepacia (strain ATCC BAA-245 / DSM 16553 / LMG 16656 / NCTC 13227 / J2315 / CF5610)</name>
    <name type="common">Burkholderia cepacia (strain J2315)</name>
    <dbReference type="NCBI Taxonomy" id="216591"/>
    <lineage>
        <taxon>Bacteria</taxon>
        <taxon>Pseudomonadati</taxon>
        <taxon>Pseudomonadota</taxon>
        <taxon>Betaproteobacteria</taxon>
        <taxon>Burkholderiales</taxon>
        <taxon>Burkholderiaceae</taxon>
        <taxon>Burkholderia</taxon>
        <taxon>Burkholderia cepacia complex</taxon>
    </lineage>
</organism>
<protein>
    <recommendedName>
        <fullName evidence="1">UPF0303 protein BceJ2315_15790</fullName>
    </recommendedName>
</protein>
<dbReference type="EMBL" id="AM747720">
    <property type="protein sequence ID" value="CAR51913.1"/>
    <property type="molecule type" value="Genomic_DNA"/>
</dbReference>
<dbReference type="RefSeq" id="WP_006484123.1">
    <property type="nucleotide sequence ID" value="NC_011000.1"/>
</dbReference>
<dbReference type="SMR" id="B4E8N8"/>
<dbReference type="KEGG" id="bcj:BCAL1615"/>
<dbReference type="eggNOG" id="COG4702">
    <property type="taxonomic scope" value="Bacteria"/>
</dbReference>
<dbReference type="HOGENOM" id="CLU_101036_2_2_4"/>
<dbReference type="BioCyc" id="BCEN216591:G1G1V-1791-MONOMER"/>
<dbReference type="Proteomes" id="UP000001035">
    <property type="component" value="Chromosome 1"/>
</dbReference>
<dbReference type="Gene3D" id="3.30.450.150">
    <property type="entry name" value="Haem-degrading domain"/>
    <property type="match status" value="1"/>
</dbReference>
<dbReference type="HAMAP" id="MF_00761">
    <property type="entry name" value="UPF0303"/>
    <property type="match status" value="1"/>
</dbReference>
<dbReference type="InterPro" id="IPR005624">
    <property type="entry name" value="PduO/GlcC-like"/>
</dbReference>
<dbReference type="InterPro" id="IPR038084">
    <property type="entry name" value="PduO/GlcC-like_sf"/>
</dbReference>
<dbReference type="InterPro" id="IPR010371">
    <property type="entry name" value="YBR137W-like"/>
</dbReference>
<dbReference type="NCBIfam" id="NF002695">
    <property type="entry name" value="PRK02487.1-4"/>
    <property type="match status" value="1"/>
</dbReference>
<dbReference type="NCBIfam" id="NF002696">
    <property type="entry name" value="PRK02487.1-5"/>
    <property type="match status" value="1"/>
</dbReference>
<dbReference type="PANTHER" id="PTHR28255">
    <property type="match status" value="1"/>
</dbReference>
<dbReference type="PANTHER" id="PTHR28255:SF1">
    <property type="entry name" value="UPF0303 PROTEIN YBR137W"/>
    <property type="match status" value="1"/>
</dbReference>
<dbReference type="Pfam" id="PF03928">
    <property type="entry name" value="HbpS-like"/>
    <property type="match status" value="1"/>
</dbReference>
<dbReference type="PIRSF" id="PIRSF008757">
    <property type="entry name" value="UCP008757"/>
    <property type="match status" value="1"/>
</dbReference>
<dbReference type="SUPFAM" id="SSF143744">
    <property type="entry name" value="GlcG-like"/>
    <property type="match status" value="1"/>
</dbReference>
<reference key="1">
    <citation type="journal article" date="2009" name="J. Bacteriol.">
        <title>The genome of Burkholderia cenocepacia J2315, an epidemic pathogen of cystic fibrosis patients.</title>
        <authorList>
            <person name="Holden M.T."/>
            <person name="Seth-Smith H.M."/>
            <person name="Crossman L.C."/>
            <person name="Sebaihia M."/>
            <person name="Bentley S.D."/>
            <person name="Cerdeno-Tarraga A.M."/>
            <person name="Thomson N.R."/>
            <person name="Bason N."/>
            <person name="Quail M.A."/>
            <person name="Sharp S."/>
            <person name="Cherevach I."/>
            <person name="Churcher C."/>
            <person name="Goodhead I."/>
            <person name="Hauser H."/>
            <person name="Holroyd N."/>
            <person name="Mungall K."/>
            <person name="Scott P."/>
            <person name="Walker D."/>
            <person name="White B."/>
            <person name="Rose H."/>
            <person name="Iversen P."/>
            <person name="Mil-Homens D."/>
            <person name="Rocha E.P."/>
            <person name="Fialho A.M."/>
            <person name="Baldwin A."/>
            <person name="Dowson C."/>
            <person name="Barrell B.G."/>
            <person name="Govan J.R."/>
            <person name="Vandamme P."/>
            <person name="Hart C.A."/>
            <person name="Mahenthiralingam E."/>
            <person name="Parkhill J."/>
        </authorList>
    </citation>
    <scope>NUCLEOTIDE SEQUENCE [LARGE SCALE GENOMIC DNA]</scope>
    <source>
        <strain>ATCC BAA-245 / DSM 16553 / LMG 16656 / NCTC 13227 / J2315 / CF5610</strain>
    </source>
</reference>
<proteinExistence type="inferred from homology"/>
<name>Y1579_BURCJ</name>
<accession>B4E8N8</accession>
<feature type="chain" id="PRO_1000198323" description="UPF0303 protein BceJ2315_15790">
    <location>
        <begin position="1"/>
        <end position="165"/>
    </location>
</feature>
<sequence>MDIAHDLQSIGAQEQALVFPHFDPARAWALGNRMHALATSRGHAIAIDIATFGQPLFYAALAGATPDNADWVRRKRNVVAHFRRSSYAIGLRMQQAGATLADKHGLPVAEYASHGGSFPLTVAGAGVIGSITASGLPQRADHEFVVEALCAELGHDYAVLALARS</sequence>